<proteinExistence type="inferred from homology"/>
<keyword id="KW-0256">Endoplasmic reticulum</keyword>
<keyword id="KW-0328">Glycosyltransferase</keyword>
<keyword id="KW-0472">Membrane</keyword>
<keyword id="KW-1185">Reference proteome</keyword>
<keyword id="KW-0735">Signal-anchor</keyword>
<keyword id="KW-0808">Transferase</keyword>
<keyword id="KW-0812">Transmembrane</keyword>
<keyword id="KW-1133">Transmembrane helix</keyword>
<sequence length="447" mass="51620">MSVFGFDNIPTWLWWLLAIYLATPFVLYVVQPYLFYEGKSTKTRILIVVLGDLGHSPRILYHARSFSKAGFQVELSGYVDSDIPTDILDDDNIEIHGLKKYGSEKGLLVKALKQGLQLCSMFWKLRAVDYILLQNPPTIPILPIAVVVKTFSRAKLIIDWHNLGYTILQMKFKDQFLHPLVLLAYLIEWIFAKFANYHLTVTKAMKTYLVEKFGIDGKKIAVLYDRPGKQFSPLKEADDREALLKQEFIAKYIPKEFDISKDKIFVTSTSFTPDEDISVLIGSFKIYENSFQKFDQTLPRILCFITGKGPLQEKIVKQVQDFKWDRVQVEFLWLSSEDYPKLLRLCDYGVSLHTSSSGLDLPMKILDMFGSGLPVICMNYPVLDELVQQNVNGLKFADRRELHEALIFSVKDEQVHQEIKRGALRESKNRWNESWESALSELKIIHK</sequence>
<organism>
    <name type="scientific">Kluyveromyces lactis (strain ATCC 8585 / CBS 2359 / DSM 70799 / NBRC 1267 / NRRL Y-1140 / WM37)</name>
    <name type="common">Yeast</name>
    <name type="synonym">Candida sphaerica</name>
    <dbReference type="NCBI Taxonomy" id="284590"/>
    <lineage>
        <taxon>Eukaryota</taxon>
        <taxon>Fungi</taxon>
        <taxon>Dikarya</taxon>
        <taxon>Ascomycota</taxon>
        <taxon>Saccharomycotina</taxon>
        <taxon>Saccharomycetes</taxon>
        <taxon>Saccharomycetales</taxon>
        <taxon>Saccharomycetaceae</taxon>
        <taxon>Kluyveromyces</taxon>
    </lineage>
</organism>
<reference key="1">
    <citation type="journal article" date="2004" name="Nature">
        <title>Genome evolution in yeasts.</title>
        <authorList>
            <person name="Dujon B."/>
            <person name="Sherman D."/>
            <person name="Fischer G."/>
            <person name="Durrens P."/>
            <person name="Casaregola S."/>
            <person name="Lafontaine I."/>
            <person name="de Montigny J."/>
            <person name="Marck C."/>
            <person name="Neuveglise C."/>
            <person name="Talla E."/>
            <person name="Goffard N."/>
            <person name="Frangeul L."/>
            <person name="Aigle M."/>
            <person name="Anthouard V."/>
            <person name="Babour A."/>
            <person name="Barbe V."/>
            <person name="Barnay S."/>
            <person name="Blanchin S."/>
            <person name="Beckerich J.-M."/>
            <person name="Beyne E."/>
            <person name="Bleykasten C."/>
            <person name="Boisrame A."/>
            <person name="Boyer J."/>
            <person name="Cattolico L."/>
            <person name="Confanioleri F."/>
            <person name="de Daruvar A."/>
            <person name="Despons L."/>
            <person name="Fabre E."/>
            <person name="Fairhead C."/>
            <person name="Ferry-Dumazet H."/>
            <person name="Groppi A."/>
            <person name="Hantraye F."/>
            <person name="Hennequin C."/>
            <person name="Jauniaux N."/>
            <person name="Joyet P."/>
            <person name="Kachouri R."/>
            <person name="Kerrest A."/>
            <person name="Koszul R."/>
            <person name="Lemaire M."/>
            <person name="Lesur I."/>
            <person name="Ma L."/>
            <person name="Muller H."/>
            <person name="Nicaud J.-M."/>
            <person name="Nikolski M."/>
            <person name="Oztas S."/>
            <person name="Ozier-Kalogeropoulos O."/>
            <person name="Pellenz S."/>
            <person name="Potier S."/>
            <person name="Richard G.-F."/>
            <person name="Straub M.-L."/>
            <person name="Suleau A."/>
            <person name="Swennen D."/>
            <person name="Tekaia F."/>
            <person name="Wesolowski-Louvel M."/>
            <person name="Westhof E."/>
            <person name="Wirth B."/>
            <person name="Zeniou-Meyer M."/>
            <person name="Zivanovic Y."/>
            <person name="Bolotin-Fukuhara M."/>
            <person name="Thierry A."/>
            <person name="Bouchier C."/>
            <person name="Caudron B."/>
            <person name="Scarpelli C."/>
            <person name="Gaillardin C."/>
            <person name="Weissenbach J."/>
            <person name="Wincker P."/>
            <person name="Souciet J.-L."/>
        </authorList>
    </citation>
    <scope>NUCLEOTIDE SEQUENCE [LARGE SCALE GENOMIC DNA]</scope>
    <source>
        <strain>ATCC 8585 / CBS 2359 / DSM 70799 / NBRC 1267 / NRRL Y-1140 / WM37</strain>
    </source>
</reference>
<gene>
    <name type="primary">ALG1</name>
    <name type="ordered locus">KLLA0B09405g</name>
</gene>
<protein>
    <recommendedName>
        <fullName evidence="1">Chitobiosyldiphosphodolichol beta-mannosyltransferase</fullName>
        <ecNumber evidence="1">2.4.1.142</ecNumber>
    </recommendedName>
    <alternativeName>
        <fullName>Asparagine-linked glycosylation protein 1</fullName>
    </alternativeName>
    <alternativeName>
        <fullName>Beta-1,4-mannosyltransferase</fullName>
    </alternativeName>
    <alternativeName>
        <fullName>GDP-Man:GlcNAc2-PP-dolichol mannosyltransferase</fullName>
    </alternativeName>
    <alternativeName>
        <fullName>GDP-mannose-dolichol diphosphochitobiose mannosyltransferase</fullName>
    </alternativeName>
</protein>
<evidence type="ECO:0000250" key="1">
    <source>
        <dbReference type="UniProtKB" id="P16661"/>
    </source>
</evidence>
<evidence type="ECO:0000255" key="2"/>
<evidence type="ECO:0000305" key="3"/>
<dbReference type="EC" id="2.4.1.142" evidence="1"/>
<dbReference type="EMBL" id="CR382122">
    <property type="protein sequence ID" value="CAH02340.1"/>
    <property type="molecule type" value="Genomic_DNA"/>
</dbReference>
<dbReference type="RefSeq" id="XP_451947.1">
    <property type="nucleotide sequence ID" value="XM_451947.1"/>
</dbReference>
<dbReference type="SMR" id="Q6CVU2"/>
<dbReference type="FunCoup" id="Q6CVU2">
    <property type="interactions" value="942"/>
</dbReference>
<dbReference type="STRING" id="284590.Q6CVU2"/>
<dbReference type="CAZy" id="GT33">
    <property type="family name" value="Glycosyltransferase Family 33"/>
</dbReference>
<dbReference type="GlyCosmos" id="Q6CVU2">
    <property type="glycosylation" value="1 site, No reported glycans"/>
</dbReference>
<dbReference type="PaxDb" id="284590-Q6CVU2"/>
<dbReference type="KEGG" id="kla:KLLA0_B09405g"/>
<dbReference type="eggNOG" id="KOG2941">
    <property type="taxonomic scope" value="Eukaryota"/>
</dbReference>
<dbReference type="HOGENOM" id="CLU_012079_1_1_1"/>
<dbReference type="InParanoid" id="Q6CVU2"/>
<dbReference type="OMA" id="CKLIIDW"/>
<dbReference type="UniPathway" id="UPA00378"/>
<dbReference type="Proteomes" id="UP000000598">
    <property type="component" value="Chromosome B"/>
</dbReference>
<dbReference type="GO" id="GO:0098554">
    <property type="term" value="C:cytoplasmic side of endoplasmic reticulum membrane"/>
    <property type="evidence" value="ECO:0000250"/>
    <property type="project" value="UniProtKB"/>
</dbReference>
<dbReference type="GO" id="GO:0004578">
    <property type="term" value="F:chitobiosyldiphosphodolichol beta-mannosyltransferase activity"/>
    <property type="evidence" value="ECO:0000250"/>
    <property type="project" value="UniProtKB"/>
</dbReference>
<dbReference type="GO" id="GO:0006488">
    <property type="term" value="P:dolichol-linked oligosaccharide biosynthetic process"/>
    <property type="evidence" value="ECO:0000250"/>
    <property type="project" value="UniProtKB"/>
</dbReference>
<dbReference type="FunFam" id="3.40.50.2000:FF:000216">
    <property type="entry name" value="Chitobiosyldiphosphodolichol beta-mannosyltransferase"/>
    <property type="match status" value="1"/>
</dbReference>
<dbReference type="Gene3D" id="3.40.50.2000">
    <property type="entry name" value="Glycogen Phosphorylase B"/>
    <property type="match status" value="2"/>
</dbReference>
<dbReference type="InterPro" id="IPR026051">
    <property type="entry name" value="ALG1-like"/>
</dbReference>
<dbReference type="InterPro" id="IPR001296">
    <property type="entry name" value="Glyco_trans_1"/>
</dbReference>
<dbReference type="PANTHER" id="PTHR13036">
    <property type="entry name" value="BETA1,4 MANNOSYLTRANSFERASE"/>
    <property type="match status" value="1"/>
</dbReference>
<dbReference type="PANTHER" id="PTHR13036:SF0">
    <property type="entry name" value="CHITOBIOSYLDIPHOSPHODOLICHOL BETA-MANNOSYLTRANSFERASE"/>
    <property type="match status" value="1"/>
</dbReference>
<dbReference type="Pfam" id="PF00534">
    <property type="entry name" value="Glycos_transf_1"/>
    <property type="match status" value="1"/>
</dbReference>
<dbReference type="SUPFAM" id="SSF53756">
    <property type="entry name" value="UDP-Glycosyltransferase/glycogen phosphorylase"/>
    <property type="match status" value="1"/>
</dbReference>
<accession>Q6CVU2</accession>
<name>ALG1_KLULA</name>
<comment type="function">
    <text evidence="1">Participates in the formation of the lipid-linked precursor oligosaccharide for N-glycosylation. Involved in assembling the dolichol-pyrophosphate-GlcNAc(2)-Man(5) intermediate on the cytoplasmic surface of the ER.</text>
</comment>
<comment type="catalytic activity">
    <reaction evidence="1">
        <text>an N,N'-diacetylchitobiosyl-diphospho-di-trans,poly-cis-dolichol + GDP-alpha-D-mannose = a beta-D-Man-(1-&gt;4)-beta-D-GlcNAc-(1-&gt;4)-alpha-D-GlcNAc-diphospho-di-trans,poly-cis-dolichol + GDP + H(+)</text>
        <dbReference type="Rhea" id="RHEA:13865"/>
        <dbReference type="Rhea" id="RHEA-COMP:19510"/>
        <dbReference type="Rhea" id="RHEA-COMP:19511"/>
        <dbReference type="ChEBI" id="CHEBI:15378"/>
        <dbReference type="ChEBI" id="CHEBI:57269"/>
        <dbReference type="ChEBI" id="CHEBI:57527"/>
        <dbReference type="ChEBI" id="CHEBI:58189"/>
        <dbReference type="ChEBI" id="CHEBI:58472"/>
        <dbReference type="EC" id="2.4.1.142"/>
    </reaction>
    <physiologicalReaction direction="left-to-right" evidence="1">
        <dbReference type="Rhea" id="RHEA:13866"/>
    </physiologicalReaction>
</comment>
<comment type="pathway">
    <text evidence="1">Protein modification; protein glycosylation.</text>
</comment>
<comment type="subcellular location">
    <subcellularLocation>
        <location evidence="1">Endoplasmic reticulum membrane</location>
        <topology evidence="1">Single-pass membrane protein</topology>
    </subcellularLocation>
</comment>
<comment type="similarity">
    <text evidence="3">Belongs to the glycosyltransferase group 1 family.</text>
</comment>
<feature type="chain" id="PRO_0000080256" description="Chitobiosyldiphosphodolichol beta-mannosyltransferase">
    <location>
        <begin position="1"/>
        <end position="447"/>
    </location>
</feature>
<feature type="topological domain" description="Lumenal" evidence="1">
    <location>
        <begin position="1"/>
        <end position="8"/>
    </location>
</feature>
<feature type="transmembrane region" description="Helical" evidence="2">
    <location>
        <begin position="9"/>
        <end position="29"/>
    </location>
</feature>
<feature type="topological domain" description="Cytoplasmic" evidence="1">
    <location>
        <begin position="30"/>
        <end position="127"/>
    </location>
</feature>
<feature type="intramembrane region" description="Helical" evidence="2">
    <location>
        <begin position="128"/>
        <end position="148"/>
    </location>
</feature>
<feature type="topological domain" description="Lumenal" evidence="1">
    <location>
        <begin position="149"/>
        <end position="447"/>
    </location>
</feature>